<reference key="1">
    <citation type="journal article" date="1996" name="J. Invest. Dermatol.">
        <title>Tazarotene-induced gene 1 (TIG1), a novel retinoic acid receptor-responsive gene in skin.</title>
        <authorList>
            <person name="Nagpal S."/>
            <person name="Patel S."/>
            <person name="Asano A.T."/>
            <person name="Johnson A.T."/>
            <person name="Duvic M."/>
            <person name="Chandraratna R.A.S."/>
        </authorList>
    </citation>
    <scope>NUCLEOTIDE SEQUENCE [MRNA] (ISOFORM 1)</scope>
    <scope>VARIANT GLY-42</scope>
    <source>
        <tissue>Skin</tissue>
    </source>
</reference>
<reference key="2">
    <citation type="journal article" date="2004" name="Genome Res.">
        <title>The status, quality, and expansion of the NIH full-length cDNA project: the Mammalian Gene Collection (MGC).</title>
        <authorList>
            <consortium name="The MGC Project Team"/>
        </authorList>
    </citation>
    <scope>NUCLEOTIDE SEQUENCE [LARGE SCALE MRNA] (ISOFORM 2)</scope>
    <source>
        <tissue>Skin</tissue>
    </source>
</reference>
<reference key="3">
    <citation type="journal article" date="1996" name="Cell. Mol. Biol.">
        <title>Identification by differential display of a mRNA specifically induced by 12-O-tetradecanoylphorbol-13-acetate (TPA) in T84 human colon carcinoma cells.</title>
        <authorList>
            <person name="Cafferata E.G."/>
            <person name="Gonzalez-Guerrico A.M."/>
            <person name="Pivetta O.H."/>
            <person name="Santa-Coloma T.A."/>
        </authorList>
    </citation>
    <scope>PARTIAL NUCLEOTIDE SEQUENCE [MRNA]</scope>
</reference>
<reference key="4">
    <citation type="journal article" date="2011" name="Cancer Res.">
        <title>Tumor suppressor RARRES1 interacts with cytoplasmic carboxypeptidase AGBL2 to regulate the alpha-tubulin tyrosination cycle.</title>
        <authorList>
            <person name="Sahab Z.J."/>
            <person name="Hall M.D."/>
            <person name="Me Sung Y."/>
            <person name="Dakshanamurthy S."/>
            <person name="Ji Y."/>
            <person name="Kumar D."/>
            <person name="Byers S.W."/>
        </authorList>
    </citation>
    <scope>FUNCTION</scope>
    <scope>LACK OF GLYCOSYLATION</scope>
    <scope>SUBCELLULAR LOCATION</scope>
    <scope>INTERACTION WITH AGBL2; KIF11 AND MAPRE1</scope>
</reference>
<reference key="5">
    <citation type="journal article" date="2016" name="J. Proteome Res.">
        <title>SweetNET: A Bioinformatics Workflow for Glycopeptide MS/MS Spectral Analysis.</title>
        <authorList>
            <person name="Nasir W."/>
            <person name="Toledo A.G."/>
            <person name="Noborn F."/>
            <person name="Nilsson J."/>
            <person name="Wang M."/>
            <person name="Bandeira N."/>
            <person name="Larson G."/>
        </authorList>
    </citation>
    <scope>GLYCOSYLATION AT SER-40</scope>
</reference>
<reference key="6">
    <citation type="journal article" date="2022" name="J. Proteins Proteom.">
        <title>Mass spectrometric analysis of chondroitin sulfate-linked peptides.</title>
        <authorList>
            <person name="Ramarajan M.G."/>
            <person name="Saraswat M."/>
            <person name="Budhraja R."/>
            <person name="Garapati K."/>
            <person name="Raymond K."/>
            <person name="Pandey A."/>
        </authorList>
    </citation>
    <scope>SUBCELLULAR LOCATION</scope>
    <scope>TISSUE SPECIFICITY</scope>
    <scope>GLYCOSYLATION AT SER-40</scope>
</reference>
<reference key="7">
    <citation type="journal article" date="2023" name="Mol. Cell. Proteomics">
        <title>Mapping the Human Chondroitin Sulfate Glycoproteome Reveals an Unexpected Correlation Between Glycan Sulfation and Attachment Site Characteristics.</title>
        <authorList>
            <person name="Noborn F."/>
            <person name="Nilsson J."/>
            <person name="Sihlbom C."/>
            <person name="Nikpour M."/>
            <person name="Kjellen L."/>
            <person name="Larson G."/>
        </authorList>
    </citation>
    <scope>SUBCELLULAR LOCATION</scope>
    <scope>TISSUE SPECIFICITY</scope>
    <scope>GLYCOSYLATION AT SER-40</scope>
</reference>
<organism>
    <name type="scientific">Homo sapiens</name>
    <name type="common">Human</name>
    <dbReference type="NCBI Taxonomy" id="9606"/>
    <lineage>
        <taxon>Eukaryota</taxon>
        <taxon>Metazoa</taxon>
        <taxon>Chordata</taxon>
        <taxon>Craniata</taxon>
        <taxon>Vertebrata</taxon>
        <taxon>Euteleostomi</taxon>
        <taxon>Mammalia</taxon>
        <taxon>Eutheria</taxon>
        <taxon>Euarchontoglires</taxon>
        <taxon>Primates</taxon>
        <taxon>Haplorrhini</taxon>
        <taxon>Catarrhini</taxon>
        <taxon>Hominidae</taxon>
        <taxon>Homo</taxon>
    </lineage>
</organism>
<accession>P49788</accession>
<accession>Q8N1D7</accession>
<feature type="chain" id="PRO_0000191346" description="Retinoic acid receptor responder protein 1">
    <location>
        <begin position="1"/>
        <end position="294"/>
    </location>
</feature>
<feature type="topological domain" description="Lumenal" evidence="1">
    <location>
        <begin position="1"/>
        <end position="20"/>
    </location>
</feature>
<feature type="transmembrane region" description="Helical; Signal-anchor for type III membrane protein" evidence="1">
    <location>
        <begin position="21"/>
        <end position="42"/>
    </location>
</feature>
<feature type="topological domain" description="Cytoplasmic" evidence="1">
    <location>
        <begin position="43"/>
        <end position="294"/>
    </location>
</feature>
<feature type="domain" description="Cystatin LXN-type 1" evidence="2">
    <location>
        <begin position="38"/>
        <end position="153"/>
    </location>
</feature>
<feature type="domain" description="Cystatin LXN-type 2" evidence="2">
    <location>
        <begin position="173"/>
        <end position="276"/>
    </location>
</feature>
<feature type="region of interest" description="Disordered" evidence="3">
    <location>
        <begin position="273"/>
        <end position="294"/>
    </location>
</feature>
<feature type="glycosylation site" description="O-linked (Xyl...) (chondroitin sulfate) serine" evidence="5 6 7">
    <location>
        <position position="40"/>
    </location>
</feature>
<feature type="splice variant" id="VSP_010697" description="In isoform 1." evidence="9">
    <original>KTND</original>
    <variation>VRKT</variation>
    <location>
        <begin position="225"/>
        <end position="228"/>
    </location>
</feature>
<feature type="splice variant" id="VSP_010698" description="In isoform 1." evidence="9">
    <location>
        <begin position="229"/>
        <end position="294"/>
    </location>
</feature>
<feature type="sequence variant" id="VAR_060094" description="In dbSNP:rs7621322." evidence="8">
    <original>D</original>
    <variation>G</variation>
    <location>
        <position position="42"/>
    </location>
</feature>
<feature type="sequence variant" id="VAR_053612" description="In dbSNP:rs11919919.">
    <original>D</original>
    <variation>V</variation>
    <location>
        <position position="158"/>
    </location>
</feature>
<feature type="sequence conflict" description="In Ref. 1; AAA99722." evidence="10" ref="1">
    <original>A</original>
    <variation>K</variation>
    <location>
        <position position="62"/>
    </location>
</feature>
<gene>
    <name type="primary">RARRES1</name>
    <name type="synonym">PEIG1</name>
    <name type="synonym">TIG1</name>
</gene>
<evidence type="ECO:0000255" key="1"/>
<evidence type="ECO:0000255" key="2">
    <source>
        <dbReference type="PROSITE-ProRule" id="PRU01377"/>
    </source>
</evidence>
<evidence type="ECO:0000256" key="3">
    <source>
        <dbReference type="SAM" id="MobiDB-lite"/>
    </source>
</evidence>
<evidence type="ECO:0000269" key="4">
    <source>
    </source>
</evidence>
<evidence type="ECO:0000269" key="5">
    <source>
    </source>
</evidence>
<evidence type="ECO:0000269" key="6">
    <source>
    </source>
</evidence>
<evidence type="ECO:0000269" key="7">
    <source>
    </source>
</evidence>
<evidence type="ECO:0000269" key="8">
    <source>
    </source>
</evidence>
<evidence type="ECO:0000303" key="9">
    <source>
    </source>
</evidence>
<evidence type="ECO:0000305" key="10"/>
<sequence>MQPRRQRLPAPWSGPRGPRPTAPLLALLLLLAPVAAPAGSGDPDDPGQPQDAGVPRRLLQQAARAALHFFNFRSGSPSALRVLAEVQEGRAWINPKEGCKVHVVFSTERYNPESLLQEGEGRLGKCSARVFFKNQKPRPTINVTCTRLIEKKKRQQEDYLLYKQMKQLKNPLEIVSIPDNHGHIDPSLRLIWDLAFLGSSYVMWEMTTQVSHYYLAQLTSVRQWKTNDDTIDFDYTVLLHELSTQEIIPCRIHLVWYPGKPLKVKYHCQELQTPEEASGTEEGSAVVPTELSNF</sequence>
<name>TIG1_HUMAN</name>
<keyword id="KW-0025">Alternative splicing</keyword>
<keyword id="KW-0325">Glycoprotein</keyword>
<keyword id="KW-0472">Membrane</keyword>
<keyword id="KW-0646">Protease inhibitor</keyword>
<keyword id="KW-0654">Proteoglycan</keyword>
<keyword id="KW-1267">Proteomics identification</keyword>
<keyword id="KW-1185">Reference proteome</keyword>
<keyword id="KW-0677">Repeat</keyword>
<keyword id="KW-0964">Secreted</keyword>
<keyword id="KW-0735">Signal-anchor</keyword>
<keyword id="KW-0812">Transmembrane</keyword>
<keyword id="KW-1133">Transmembrane helix</keyword>
<dbReference type="EMBL" id="U27185">
    <property type="protein sequence ID" value="AAA99722.1"/>
    <property type="molecule type" value="mRNA"/>
</dbReference>
<dbReference type="EMBL" id="BC029640">
    <property type="protein sequence ID" value="AAH29640.1"/>
    <property type="molecule type" value="mRNA"/>
</dbReference>
<dbReference type="CCDS" id="CCDS3184.1">
    <molecule id="P49788-1"/>
</dbReference>
<dbReference type="CCDS" id="CCDS54665.1">
    <molecule id="P49788-2"/>
</dbReference>
<dbReference type="RefSeq" id="NP_002879.2">
    <molecule id="P49788-2"/>
    <property type="nucleotide sequence ID" value="NM_002888.3"/>
</dbReference>
<dbReference type="RefSeq" id="NP_996846.1">
    <molecule id="P49788-1"/>
    <property type="nucleotide sequence ID" value="NM_206963.2"/>
</dbReference>
<dbReference type="SMR" id="P49788"/>
<dbReference type="BioGRID" id="111853">
    <property type="interactions" value="32"/>
</dbReference>
<dbReference type="FunCoup" id="P49788">
    <property type="interactions" value="162"/>
</dbReference>
<dbReference type="IntAct" id="P49788">
    <property type="interactions" value="21"/>
</dbReference>
<dbReference type="STRING" id="9606.ENSP00000237696"/>
<dbReference type="DrugBank" id="DB00755">
    <property type="generic name" value="Tretinoin"/>
</dbReference>
<dbReference type="MEROPS" id="I47.002"/>
<dbReference type="GlyGen" id="P49788">
    <property type="glycosylation" value="3 sites"/>
</dbReference>
<dbReference type="iPTMnet" id="P49788"/>
<dbReference type="PhosphoSitePlus" id="P49788"/>
<dbReference type="BioMuta" id="RARRES1"/>
<dbReference type="DMDM" id="57014141"/>
<dbReference type="jPOST" id="P49788"/>
<dbReference type="MassIVE" id="P49788"/>
<dbReference type="PaxDb" id="9606-ENSP00000237696"/>
<dbReference type="PeptideAtlas" id="P49788"/>
<dbReference type="ProteomicsDB" id="56117">
    <molecule id="P49788-1"/>
</dbReference>
<dbReference type="ProteomicsDB" id="56118">
    <molecule id="P49788-2"/>
</dbReference>
<dbReference type="TopDownProteomics" id="P49788-2">
    <molecule id="P49788-2"/>
</dbReference>
<dbReference type="Antibodypedia" id="1295">
    <property type="antibodies" value="383 antibodies from 26 providers"/>
</dbReference>
<dbReference type="DNASU" id="5918"/>
<dbReference type="Ensembl" id="ENST00000237696.10">
    <molecule id="P49788-1"/>
    <property type="protein sequence ID" value="ENSP00000237696.5"/>
    <property type="gene ID" value="ENSG00000118849.10"/>
</dbReference>
<dbReference type="Ensembl" id="ENST00000479756.1">
    <molecule id="P49788-2"/>
    <property type="protein sequence ID" value="ENSP00000418556.1"/>
    <property type="gene ID" value="ENSG00000118849.10"/>
</dbReference>
<dbReference type="GeneID" id="5918"/>
<dbReference type="KEGG" id="hsa:5918"/>
<dbReference type="MANE-Select" id="ENST00000237696.10">
    <property type="protein sequence ID" value="ENSP00000237696.5"/>
    <property type="RefSeq nucleotide sequence ID" value="NM_206963.2"/>
    <property type="RefSeq protein sequence ID" value="NP_996846.1"/>
</dbReference>
<dbReference type="UCSC" id="uc003fci.4">
    <molecule id="P49788-1"/>
    <property type="organism name" value="human"/>
</dbReference>
<dbReference type="AGR" id="HGNC:9867"/>
<dbReference type="CTD" id="5918"/>
<dbReference type="DisGeNET" id="5918"/>
<dbReference type="GeneCards" id="RARRES1"/>
<dbReference type="HGNC" id="HGNC:9867">
    <property type="gene designation" value="RARRES1"/>
</dbReference>
<dbReference type="HPA" id="ENSG00000118849">
    <property type="expression patterns" value="Tissue enhanced (adipose tissue, fallopian tube)"/>
</dbReference>
<dbReference type="MIM" id="605090">
    <property type="type" value="gene"/>
</dbReference>
<dbReference type="neXtProt" id="NX_P49788"/>
<dbReference type="OpenTargets" id="ENSG00000118849"/>
<dbReference type="PharmGKB" id="PA34228"/>
<dbReference type="VEuPathDB" id="HostDB:ENSG00000118849"/>
<dbReference type="eggNOG" id="ENOG502S0TS">
    <property type="taxonomic scope" value="Eukaryota"/>
</dbReference>
<dbReference type="GeneTree" id="ENSGT00530000063813"/>
<dbReference type="HOGENOM" id="CLU_083048_1_0_1"/>
<dbReference type="InParanoid" id="P49788"/>
<dbReference type="OMA" id="WIRKDDF"/>
<dbReference type="OrthoDB" id="9254763at2759"/>
<dbReference type="PAN-GO" id="P49788">
    <property type="GO annotations" value="2 GO annotations based on evolutionary models"/>
</dbReference>
<dbReference type="PhylomeDB" id="P49788"/>
<dbReference type="TreeFam" id="TF332787"/>
<dbReference type="PathwayCommons" id="P49788"/>
<dbReference type="SignaLink" id="P49788"/>
<dbReference type="SIGNOR" id="P49788"/>
<dbReference type="BioGRID-ORCS" id="5918">
    <property type="hits" value="9 hits in 1151 CRISPR screens"/>
</dbReference>
<dbReference type="ChiTaRS" id="RARRES1">
    <property type="organism name" value="human"/>
</dbReference>
<dbReference type="GeneWiki" id="RARRES1"/>
<dbReference type="GenomeRNAi" id="5918"/>
<dbReference type="Pharos" id="P49788">
    <property type="development level" value="Tbio"/>
</dbReference>
<dbReference type="PRO" id="PR:P49788"/>
<dbReference type="Proteomes" id="UP000005640">
    <property type="component" value="Chromosome 3"/>
</dbReference>
<dbReference type="RNAct" id="P49788">
    <property type="molecule type" value="protein"/>
</dbReference>
<dbReference type="Bgee" id="ENSG00000118849">
    <property type="expression patterns" value="Expressed in pericardium and 157 other cell types or tissues"/>
</dbReference>
<dbReference type="GO" id="GO:0070062">
    <property type="term" value="C:extracellular exosome"/>
    <property type="evidence" value="ECO:0007005"/>
    <property type="project" value="UniProtKB"/>
</dbReference>
<dbReference type="GO" id="GO:0005615">
    <property type="term" value="C:extracellular space"/>
    <property type="evidence" value="ECO:0000318"/>
    <property type="project" value="GO_Central"/>
</dbReference>
<dbReference type="GO" id="GO:0016020">
    <property type="term" value="C:membrane"/>
    <property type="evidence" value="ECO:0000304"/>
    <property type="project" value="ProtInc"/>
</dbReference>
<dbReference type="GO" id="GO:0008191">
    <property type="term" value="F:metalloendopeptidase inhibitor activity"/>
    <property type="evidence" value="ECO:0000318"/>
    <property type="project" value="GO_Central"/>
</dbReference>
<dbReference type="GO" id="GO:0008285">
    <property type="term" value="P:negative regulation of cell population proliferation"/>
    <property type="evidence" value="ECO:0000304"/>
    <property type="project" value="ProtInc"/>
</dbReference>
<dbReference type="FunFam" id="3.10.450.10:FF:000012">
    <property type="entry name" value="Retinoic acid receptor responder (tazarotene-induced) 1"/>
    <property type="match status" value="1"/>
</dbReference>
<dbReference type="FunFam" id="3.10.450.10:FF:000021">
    <property type="entry name" value="Retinoic acid receptor responder (tazarotene-induced) 1"/>
    <property type="match status" value="1"/>
</dbReference>
<dbReference type="Gene3D" id="3.10.450.10">
    <property type="match status" value="2"/>
</dbReference>
<dbReference type="InterPro" id="IPR049897">
    <property type="entry name" value="CYSTATIN_LXN"/>
</dbReference>
<dbReference type="InterPro" id="IPR046350">
    <property type="entry name" value="Cystatin_sf"/>
</dbReference>
<dbReference type="InterPro" id="IPR009684">
    <property type="entry name" value="Latexin"/>
</dbReference>
<dbReference type="InterPro" id="IPR027261">
    <property type="entry name" value="TIG1"/>
</dbReference>
<dbReference type="PANTHER" id="PTHR28591">
    <property type="entry name" value="LATEXIN"/>
    <property type="match status" value="1"/>
</dbReference>
<dbReference type="PANTHER" id="PTHR28591:SF2">
    <property type="entry name" value="RETINOIC ACID RECEPTOR RESPONDER PROTEIN 1"/>
    <property type="match status" value="1"/>
</dbReference>
<dbReference type="Pfam" id="PF06907">
    <property type="entry name" value="LXN"/>
    <property type="match status" value="1"/>
</dbReference>
<dbReference type="PIRSF" id="PIRSF011132">
    <property type="entry name" value="Prot_inh_latexin"/>
    <property type="match status" value="1"/>
</dbReference>
<dbReference type="PIRSF" id="PIRSF500784">
    <property type="entry name" value="TAG1"/>
    <property type="match status" value="1"/>
</dbReference>
<dbReference type="SUPFAM" id="SSF54403">
    <property type="entry name" value="Cystatin/monellin"/>
    <property type="match status" value="2"/>
</dbReference>
<dbReference type="PROSITE" id="PS52033">
    <property type="entry name" value="CYSTATIN_LXN"/>
    <property type="match status" value="2"/>
</dbReference>
<protein>
    <recommendedName>
        <fullName>Retinoic acid receptor responder protein 1</fullName>
    </recommendedName>
    <alternativeName>
        <fullName>Phorbol ester-induced gene 1 protein</fullName>
        <shortName>PERG-1</shortName>
    </alternativeName>
    <alternativeName>
        <fullName>RAR-responsive protein TIG1</fullName>
    </alternativeName>
    <alternativeName>
        <fullName>Tazarotene-induced gene 1 protein</fullName>
    </alternativeName>
</protein>
<proteinExistence type="evidence at protein level"/>
<comment type="function">
    <text evidence="4">Inhibitor of the cytoplasmic carboxypeptidase AGBL2, may regulate the alpha-tubulin tyrosination cycle.</text>
</comment>
<comment type="subunit">
    <text evidence="4">Interacts with AGBL2, KIF11 and MAPRE1.</text>
</comment>
<comment type="interaction">
    <interactant intactId="EBI-25504187">
        <id>P49788</id>
    </interactant>
    <interactant intactId="EBI-10200479">
        <id>P20155</id>
        <label>SPINK2</label>
    </interactant>
    <organismsDiffer>false</organismsDiffer>
    <experiments>5</experiments>
</comment>
<comment type="subcellular location">
    <subcellularLocation>
        <location evidence="4">Membrane</location>
        <topology evidence="4">Single-pass type III membrane protein</topology>
    </subcellularLocation>
    <subcellularLocation>
        <location evidence="6 7">Secreted</location>
    </subcellularLocation>
</comment>
<comment type="alternative products">
    <event type="alternative splicing"/>
    <isoform>
        <id>P49788-1</id>
        <name>2</name>
        <sequence type="displayed"/>
    </isoform>
    <isoform>
        <id>P49788-2</id>
        <name>1</name>
        <sequence type="described" ref="VSP_010697 VSP_010698"/>
    </isoform>
</comment>
<comment type="tissue specificity">
    <text evidence="6 7">Detected in urine (at protein level).</text>
</comment>
<comment type="induction">
    <text>By tazarotene and by all the retinoic acid receptors tested.</text>
</comment>
<comment type="PTM">
    <text evidence="4 5 6">Not N-glycosylated (PubMed:21303978). O-glycosylated; contains chondroitin sulfate (PubMed:27399812, PubMed:36213313).</text>
</comment>
<comment type="similarity">
    <text evidence="10">Belongs to the protease inhibitor I47 (latexin) family.</text>
</comment>
<comment type="online information" name="Atlas of Genetics and Cytogenetics in Oncology and Haematology">
    <link uri="https://atlasgeneticsoncology.org/gene/42050/RARRES1"/>
</comment>